<gene>
    <name type="primary">cdc6-1</name>
    <name type="ordered locus">Saci_0722</name>
</gene>
<accession>Q4JAS8</accession>
<proteinExistence type="inferred from homology"/>
<feature type="chain" id="PRO_0000151015" description="ORC1-type DNA replication protein 1">
    <location>
        <begin position="1"/>
        <end position="397"/>
    </location>
</feature>
<feature type="binding site" evidence="1">
    <location>
        <begin position="67"/>
        <end position="71"/>
    </location>
    <ligand>
        <name>ATP</name>
        <dbReference type="ChEBI" id="CHEBI:30616"/>
    </ligand>
</feature>
<feature type="binding site" evidence="1">
    <location>
        <position position="208"/>
    </location>
    <ligand>
        <name>ATP</name>
        <dbReference type="ChEBI" id="CHEBI:30616"/>
    </ligand>
</feature>
<feature type="binding site" evidence="1">
    <location>
        <position position="220"/>
    </location>
    <ligand>
        <name>ATP</name>
        <dbReference type="ChEBI" id="CHEBI:30616"/>
    </ligand>
</feature>
<keyword id="KW-0067">ATP-binding</keyword>
<keyword id="KW-0235">DNA replication</keyword>
<keyword id="KW-0547">Nucleotide-binding</keyword>
<keyword id="KW-1185">Reference proteome</keyword>
<organism>
    <name type="scientific">Sulfolobus acidocaldarius (strain ATCC 33909 / DSM 639 / JCM 8929 / NBRC 15157 / NCIMB 11770)</name>
    <dbReference type="NCBI Taxonomy" id="330779"/>
    <lineage>
        <taxon>Archaea</taxon>
        <taxon>Thermoproteota</taxon>
        <taxon>Thermoprotei</taxon>
        <taxon>Sulfolobales</taxon>
        <taxon>Sulfolobaceae</taxon>
        <taxon>Sulfolobus</taxon>
    </lineage>
</organism>
<comment type="function">
    <text evidence="1">Involved in regulation of DNA replication.</text>
</comment>
<comment type="similarity">
    <text evidence="1">Belongs to the CDC6/cdc18 family.</text>
</comment>
<name>CDC61_SULAC</name>
<protein>
    <recommendedName>
        <fullName evidence="1">ORC1-type DNA replication protein 1</fullName>
    </recommendedName>
</protein>
<sequence length="397" mass="44811">MSDIIDSILSTLKKGRIFRSRDLLLPDYIPEALPHREDQIRKLVEILAPITRSEKPSNVFIYGLTGTGKTAVTRFVLSNLQRKFPSKFTFIYINTRQNDTPYRILADVLEALGIRVPFTGLSTAELFKRFVKRLNTFQTIVLITLDEIDALVKKHGDDILYRLTRINYDLSTSKVSVIGITNDVKMVENLDPRVKSSLGEEEIIFPPYNAEQLEDILKQRSKIALNEGVISEEVIKLCAALAARDHGDARRALDLLRVSGEIAEREGRDLITADDVNRARIELERDRVYEVISTLPFHSKLVLISIVLGLNSNSTLTTGEVYDIYIKLAGKLGVESITQRRVSDIINELDMVGIITARVVNRGRYGKTKEISLAVSKDIVIKSIKESDERIGSLWSR</sequence>
<reference key="1">
    <citation type="journal article" date="2005" name="J. Bacteriol.">
        <title>The genome of Sulfolobus acidocaldarius, a model organism of the Crenarchaeota.</title>
        <authorList>
            <person name="Chen L."/>
            <person name="Bruegger K."/>
            <person name="Skovgaard M."/>
            <person name="Redder P."/>
            <person name="She Q."/>
            <person name="Torarinsson E."/>
            <person name="Greve B."/>
            <person name="Awayez M."/>
            <person name="Zibat A."/>
            <person name="Klenk H.-P."/>
            <person name="Garrett R.A."/>
        </authorList>
    </citation>
    <scope>NUCLEOTIDE SEQUENCE [LARGE SCALE GENOMIC DNA]</scope>
    <source>
        <strain>ATCC 33909 / DSM 639 / JCM 8929 / NBRC 15157 / NCIMB 11770</strain>
    </source>
</reference>
<dbReference type="EMBL" id="CP000077">
    <property type="protein sequence ID" value="AAY80101.1"/>
    <property type="molecule type" value="Genomic_DNA"/>
</dbReference>
<dbReference type="RefSeq" id="WP_011277603.1">
    <property type="nucleotide sequence ID" value="NC_007181.1"/>
</dbReference>
<dbReference type="SMR" id="Q4JAS8"/>
<dbReference type="STRING" id="330779.Saci_0722"/>
<dbReference type="GeneID" id="14551236"/>
<dbReference type="KEGG" id="sai:Saci_0722"/>
<dbReference type="PATRIC" id="fig|330779.12.peg.689"/>
<dbReference type="eggNOG" id="arCOG00467">
    <property type="taxonomic scope" value="Archaea"/>
</dbReference>
<dbReference type="HOGENOM" id="CLU_025112_3_1_2"/>
<dbReference type="Proteomes" id="UP000001018">
    <property type="component" value="Chromosome"/>
</dbReference>
<dbReference type="GO" id="GO:0005524">
    <property type="term" value="F:ATP binding"/>
    <property type="evidence" value="ECO:0007669"/>
    <property type="project" value="UniProtKB-UniRule"/>
</dbReference>
<dbReference type="GO" id="GO:0016887">
    <property type="term" value="F:ATP hydrolysis activity"/>
    <property type="evidence" value="ECO:0007669"/>
    <property type="project" value="InterPro"/>
</dbReference>
<dbReference type="GO" id="GO:0006260">
    <property type="term" value="P:DNA replication"/>
    <property type="evidence" value="ECO:0007669"/>
    <property type="project" value="UniProtKB-UniRule"/>
</dbReference>
<dbReference type="CDD" id="cd00009">
    <property type="entry name" value="AAA"/>
    <property type="match status" value="1"/>
</dbReference>
<dbReference type="CDD" id="cd08768">
    <property type="entry name" value="Cdc6_C"/>
    <property type="match status" value="1"/>
</dbReference>
<dbReference type="CDD" id="cd18139">
    <property type="entry name" value="HLD_clamp_RarA"/>
    <property type="match status" value="1"/>
</dbReference>
<dbReference type="FunFam" id="1.10.8.60:FF:000073">
    <property type="entry name" value="ORC1-type DNA replication protein"/>
    <property type="match status" value="1"/>
</dbReference>
<dbReference type="FunFam" id="3.40.50.300:FF:000930">
    <property type="entry name" value="ORC1-type DNA replication protein"/>
    <property type="match status" value="1"/>
</dbReference>
<dbReference type="Gene3D" id="1.10.8.60">
    <property type="match status" value="1"/>
</dbReference>
<dbReference type="Gene3D" id="3.40.50.300">
    <property type="entry name" value="P-loop containing nucleotide triphosphate hydrolases"/>
    <property type="match status" value="1"/>
</dbReference>
<dbReference type="Gene3D" id="1.10.10.10">
    <property type="entry name" value="Winged helix-like DNA-binding domain superfamily/Winged helix DNA-binding domain"/>
    <property type="match status" value="1"/>
</dbReference>
<dbReference type="HAMAP" id="MF_01407">
    <property type="entry name" value="ORC1_type_DNA_replic_protein"/>
    <property type="match status" value="1"/>
</dbReference>
<dbReference type="InterPro" id="IPR003593">
    <property type="entry name" value="AAA+_ATPase"/>
</dbReference>
<dbReference type="InterPro" id="IPR049945">
    <property type="entry name" value="AAA_22"/>
</dbReference>
<dbReference type="InterPro" id="IPR015163">
    <property type="entry name" value="Cdc6_C"/>
</dbReference>
<dbReference type="InterPro" id="IPR055237">
    <property type="entry name" value="Cdc6_lid"/>
</dbReference>
<dbReference type="InterPro" id="IPR050311">
    <property type="entry name" value="ORC1/CDC6"/>
</dbReference>
<dbReference type="InterPro" id="IPR014277">
    <property type="entry name" value="Orc1/Cdc6_arc"/>
</dbReference>
<dbReference type="InterPro" id="IPR027417">
    <property type="entry name" value="P-loop_NTPase"/>
</dbReference>
<dbReference type="InterPro" id="IPR036388">
    <property type="entry name" value="WH-like_DNA-bd_sf"/>
</dbReference>
<dbReference type="InterPro" id="IPR036390">
    <property type="entry name" value="WH_DNA-bd_sf"/>
</dbReference>
<dbReference type="NCBIfam" id="TIGR02928">
    <property type="entry name" value="orc1/cdc6 family replication initiation protein"/>
    <property type="match status" value="1"/>
</dbReference>
<dbReference type="PANTHER" id="PTHR10763:SF26">
    <property type="entry name" value="CELL DIVISION CONTROL PROTEIN 6 HOMOLOG"/>
    <property type="match status" value="1"/>
</dbReference>
<dbReference type="PANTHER" id="PTHR10763">
    <property type="entry name" value="CELL DIVISION CONTROL PROTEIN 6-RELATED"/>
    <property type="match status" value="1"/>
</dbReference>
<dbReference type="Pfam" id="PF13401">
    <property type="entry name" value="AAA_22"/>
    <property type="match status" value="1"/>
</dbReference>
<dbReference type="Pfam" id="PF09079">
    <property type="entry name" value="Cdc6_C"/>
    <property type="match status" value="1"/>
</dbReference>
<dbReference type="Pfam" id="PF22703">
    <property type="entry name" value="Cdc6_lid"/>
    <property type="match status" value="1"/>
</dbReference>
<dbReference type="SMART" id="SM00382">
    <property type="entry name" value="AAA"/>
    <property type="match status" value="1"/>
</dbReference>
<dbReference type="SMART" id="SM01074">
    <property type="entry name" value="Cdc6_C"/>
    <property type="match status" value="1"/>
</dbReference>
<dbReference type="SUPFAM" id="SSF52540">
    <property type="entry name" value="P-loop containing nucleoside triphosphate hydrolases"/>
    <property type="match status" value="1"/>
</dbReference>
<dbReference type="SUPFAM" id="SSF46785">
    <property type="entry name" value="Winged helix' DNA-binding domain"/>
    <property type="match status" value="1"/>
</dbReference>
<evidence type="ECO:0000255" key="1">
    <source>
        <dbReference type="HAMAP-Rule" id="MF_01407"/>
    </source>
</evidence>